<proteinExistence type="inferred from homology"/>
<comment type="function">
    <text evidence="1">Small subunit of the glutamine-dependent carbamoyl phosphate synthetase (CPSase). CPSase catalyzes the formation of carbamoyl phosphate from the ammonia moiety of glutamine, carbonate, and phosphate donated by ATP, constituting the first step of 2 biosynthetic pathways, one leading to arginine and/or urea and the other to pyrimidine nucleotides. The small subunit (glutamine amidotransferase) binds and cleaves glutamine to supply the large subunit with the substrate ammonia.</text>
</comment>
<comment type="catalytic activity">
    <reaction evidence="1">
        <text>hydrogencarbonate + L-glutamine + 2 ATP + H2O = carbamoyl phosphate + L-glutamate + 2 ADP + phosphate + 2 H(+)</text>
        <dbReference type="Rhea" id="RHEA:18633"/>
        <dbReference type="ChEBI" id="CHEBI:15377"/>
        <dbReference type="ChEBI" id="CHEBI:15378"/>
        <dbReference type="ChEBI" id="CHEBI:17544"/>
        <dbReference type="ChEBI" id="CHEBI:29985"/>
        <dbReference type="ChEBI" id="CHEBI:30616"/>
        <dbReference type="ChEBI" id="CHEBI:43474"/>
        <dbReference type="ChEBI" id="CHEBI:58228"/>
        <dbReference type="ChEBI" id="CHEBI:58359"/>
        <dbReference type="ChEBI" id="CHEBI:456216"/>
        <dbReference type="EC" id="6.3.5.5"/>
    </reaction>
</comment>
<comment type="catalytic activity">
    <molecule>Carbamoyl phosphate synthase small chain</molecule>
    <reaction evidence="1">
        <text>L-glutamine + H2O = L-glutamate + NH4(+)</text>
        <dbReference type="Rhea" id="RHEA:15889"/>
        <dbReference type="ChEBI" id="CHEBI:15377"/>
        <dbReference type="ChEBI" id="CHEBI:28938"/>
        <dbReference type="ChEBI" id="CHEBI:29985"/>
        <dbReference type="ChEBI" id="CHEBI:58359"/>
    </reaction>
</comment>
<comment type="pathway">
    <text evidence="1">Amino-acid biosynthesis; L-arginine biosynthesis; carbamoyl phosphate from bicarbonate: step 1/1.</text>
</comment>
<comment type="pathway">
    <text evidence="1">Pyrimidine metabolism; UMP biosynthesis via de novo pathway; (S)-dihydroorotate from bicarbonate: step 1/3.</text>
</comment>
<comment type="subunit">
    <text evidence="1">Composed of two chains; the small (or glutamine) chain promotes the hydrolysis of glutamine to ammonia, which is used by the large (or ammonia) chain to synthesize carbamoyl phosphate. Tetramer of heterodimers (alpha,beta)4.</text>
</comment>
<comment type="similarity">
    <text evidence="1">Belongs to the CarA family.</text>
</comment>
<keyword id="KW-0028">Amino-acid biosynthesis</keyword>
<keyword id="KW-0055">Arginine biosynthesis</keyword>
<keyword id="KW-0067">ATP-binding</keyword>
<keyword id="KW-0315">Glutamine amidotransferase</keyword>
<keyword id="KW-0436">Ligase</keyword>
<keyword id="KW-0547">Nucleotide-binding</keyword>
<keyword id="KW-0665">Pyrimidine biosynthesis</keyword>
<keyword id="KW-1185">Reference proteome</keyword>
<evidence type="ECO:0000255" key="1">
    <source>
        <dbReference type="HAMAP-Rule" id="MF_01209"/>
    </source>
</evidence>
<sequence>MDYYNNDTPGYVYLEDGTLMKGIGFGAKGIRVGEIVFTTSMNGYPESLTDPSYKGQILVITHPLIGNYGVPEKNYVNGILTNFESERIQAEGLVISELTEPFKWNSKQTLHEWLLSEGIPGVYGIDTRAVVKRVRSRGVMMGIIASGVEVNNPEEYLKKKYDEMNFIQYTSPKAPIIHQGKTGDVVVVVDCGIKHGILYQLYLRGFTVVRVPCNYSADKIMDFYPKGLLFSNGPGNPNLLTDLVKNFREIIEYNLPTLGICLGHQIATMALGGKVKKMKFGHRAINKPVIDTTTGKSYITTHNHGYAILSKQDVPIHTRVWFYNPDDGTVEGWIHEKYNIITTQFHPEARPGPWDVTWVFDKFKKMVVGDA</sequence>
<reference key="1">
    <citation type="journal article" date="2005" name="J. Bacteriol.">
        <title>The genome of Sulfolobus acidocaldarius, a model organism of the Crenarchaeota.</title>
        <authorList>
            <person name="Chen L."/>
            <person name="Bruegger K."/>
            <person name="Skovgaard M."/>
            <person name="Redder P."/>
            <person name="She Q."/>
            <person name="Torarinsson E."/>
            <person name="Greve B."/>
            <person name="Awayez M."/>
            <person name="Zibat A."/>
            <person name="Klenk H.-P."/>
            <person name="Garrett R.A."/>
        </authorList>
    </citation>
    <scope>NUCLEOTIDE SEQUENCE [LARGE SCALE GENOMIC DNA]</scope>
    <source>
        <strain>ATCC 33909 / DSM 639 / JCM 8929 / NBRC 15157 / NCIMB 11770</strain>
    </source>
</reference>
<dbReference type="EC" id="6.3.5.5" evidence="1"/>
<dbReference type="EMBL" id="CP000077">
    <property type="protein sequence ID" value="AAY80931.1"/>
    <property type="molecule type" value="Genomic_DNA"/>
</dbReference>
<dbReference type="RefSeq" id="WP_011278433.1">
    <property type="nucleotide sequence ID" value="NC_007181.1"/>
</dbReference>
<dbReference type="SMR" id="Q4J8E9"/>
<dbReference type="STRING" id="330779.Saci_1619"/>
<dbReference type="GeneID" id="14552112"/>
<dbReference type="GeneID" id="78441962"/>
<dbReference type="KEGG" id="sai:Saci_1619"/>
<dbReference type="PATRIC" id="fig|330779.12.peg.1558"/>
<dbReference type="eggNOG" id="arCOG00064">
    <property type="taxonomic scope" value="Archaea"/>
</dbReference>
<dbReference type="HOGENOM" id="CLU_035901_1_1_2"/>
<dbReference type="UniPathway" id="UPA00068">
    <property type="reaction ID" value="UER00171"/>
</dbReference>
<dbReference type="UniPathway" id="UPA00070">
    <property type="reaction ID" value="UER00115"/>
</dbReference>
<dbReference type="Proteomes" id="UP000001018">
    <property type="component" value="Chromosome"/>
</dbReference>
<dbReference type="GO" id="GO:0005524">
    <property type="term" value="F:ATP binding"/>
    <property type="evidence" value="ECO:0007669"/>
    <property type="project" value="UniProtKB-UniRule"/>
</dbReference>
<dbReference type="GO" id="GO:0004088">
    <property type="term" value="F:carbamoyl-phosphate synthase (glutamine-hydrolyzing) activity"/>
    <property type="evidence" value="ECO:0007669"/>
    <property type="project" value="UniProtKB-UniRule"/>
</dbReference>
<dbReference type="GO" id="GO:0004359">
    <property type="term" value="F:glutaminase activity"/>
    <property type="evidence" value="ECO:0007669"/>
    <property type="project" value="RHEA"/>
</dbReference>
<dbReference type="GO" id="GO:0006207">
    <property type="term" value="P:'de novo' pyrimidine nucleobase biosynthetic process"/>
    <property type="evidence" value="ECO:0007669"/>
    <property type="project" value="InterPro"/>
</dbReference>
<dbReference type="GO" id="GO:0044205">
    <property type="term" value="P:'de novo' UMP biosynthetic process"/>
    <property type="evidence" value="ECO:0007669"/>
    <property type="project" value="UniProtKB-UniRule"/>
</dbReference>
<dbReference type="GO" id="GO:0006541">
    <property type="term" value="P:glutamine metabolic process"/>
    <property type="evidence" value="ECO:0007669"/>
    <property type="project" value="InterPro"/>
</dbReference>
<dbReference type="GO" id="GO:0006526">
    <property type="term" value="P:L-arginine biosynthetic process"/>
    <property type="evidence" value="ECO:0007669"/>
    <property type="project" value="UniProtKB-UniRule"/>
</dbReference>
<dbReference type="CDD" id="cd01744">
    <property type="entry name" value="GATase1_CPSase"/>
    <property type="match status" value="1"/>
</dbReference>
<dbReference type="Gene3D" id="3.40.50.880">
    <property type="match status" value="1"/>
</dbReference>
<dbReference type="Gene3D" id="3.50.30.20">
    <property type="entry name" value="Carbamoyl-phosphate synthase small subunit, N-terminal domain"/>
    <property type="match status" value="1"/>
</dbReference>
<dbReference type="HAMAP" id="MF_01209">
    <property type="entry name" value="CPSase_S_chain"/>
    <property type="match status" value="1"/>
</dbReference>
<dbReference type="InterPro" id="IPR050472">
    <property type="entry name" value="Anth_synth/Amidotransfase"/>
</dbReference>
<dbReference type="InterPro" id="IPR006274">
    <property type="entry name" value="CarbamoylP_synth_ssu"/>
</dbReference>
<dbReference type="InterPro" id="IPR002474">
    <property type="entry name" value="CarbamoylP_synth_ssu_N"/>
</dbReference>
<dbReference type="InterPro" id="IPR036480">
    <property type="entry name" value="CarbP_synth_ssu_N_sf"/>
</dbReference>
<dbReference type="InterPro" id="IPR029062">
    <property type="entry name" value="Class_I_gatase-like"/>
</dbReference>
<dbReference type="InterPro" id="IPR035686">
    <property type="entry name" value="CPSase_GATase1"/>
</dbReference>
<dbReference type="InterPro" id="IPR017926">
    <property type="entry name" value="GATASE"/>
</dbReference>
<dbReference type="NCBIfam" id="TIGR01368">
    <property type="entry name" value="CPSaseIIsmall"/>
    <property type="match status" value="1"/>
</dbReference>
<dbReference type="NCBIfam" id="NF009475">
    <property type="entry name" value="PRK12838.1"/>
    <property type="match status" value="1"/>
</dbReference>
<dbReference type="PANTHER" id="PTHR43418:SF7">
    <property type="entry name" value="CARBAMOYL-PHOSPHATE SYNTHASE SMALL CHAIN"/>
    <property type="match status" value="1"/>
</dbReference>
<dbReference type="PANTHER" id="PTHR43418">
    <property type="entry name" value="MULTIFUNCTIONAL TRYPTOPHAN BIOSYNTHESIS PROTEIN-RELATED"/>
    <property type="match status" value="1"/>
</dbReference>
<dbReference type="Pfam" id="PF00988">
    <property type="entry name" value="CPSase_sm_chain"/>
    <property type="match status" value="1"/>
</dbReference>
<dbReference type="Pfam" id="PF00117">
    <property type="entry name" value="GATase"/>
    <property type="match status" value="1"/>
</dbReference>
<dbReference type="PRINTS" id="PR00097">
    <property type="entry name" value="ANTSNTHASEII"/>
</dbReference>
<dbReference type="PRINTS" id="PR00099">
    <property type="entry name" value="CPSGATASE"/>
</dbReference>
<dbReference type="PRINTS" id="PR00096">
    <property type="entry name" value="GATASE"/>
</dbReference>
<dbReference type="SMART" id="SM01097">
    <property type="entry name" value="CPSase_sm_chain"/>
    <property type="match status" value="1"/>
</dbReference>
<dbReference type="SUPFAM" id="SSF52021">
    <property type="entry name" value="Carbamoyl phosphate synthetase, small subunit N-terminal domain"/>
    <property type="match status" value="1"/>
</dbReference>
<dbReference type="SUPFAM" id="SSF52317">
    <property type="entry name" value="Class I glutamine amidotransferase-like"/>
    <property type="match status" value="1"/>
</dbReference>
<dbReference type="PROSITE" id="PS51273">
    <property type="entry name" value="GATASE_TYPE_1"/>
    <property type="match status" value="1"/>
</dbReference>
<feature type="chain" id="PRO_0000112364" description="Carbamoyl phosphate synthase small chain">
    <location>
        <begin position="1"/>
        <end position="371"/>
    </location>
</feature>
<feature type="domain" description="Glutamine amidotransferase type-1" evidence="1">
    <location>
        <begin position="185"/>
        <end position="371"/>
    </location>
</feature>
<feature type="region of interest" description="CPSase" evidence="1">
    <location>
        <begin position="1"/>
        <end position="186"/>
    </location>
</feature>
<feature type="active site" description="Nucleophile" evidence="1">
    <location>
        <position position="261"/>
    </location>
</feature>
<feature type="active site" evidence="1">
    <location>
        <position position="346"/>
    </location>
</feature>
<feature type="active site" evidence="1">
    <location>
        <position position="348"/>
    </location>
</feature>
<feature type="binding site" evidence="1">
    <location>
        <position position="52"/>
    </location>
    <ligand>
        <name>L-glutamine</name>
        <dbReference type="ChEBI" id="CHEBI:58359"/>
    </ligand>
</feature>
<feature type="binding site" evidence="1">
    <location>
        <position position="233"/>
    </location>
    <ligand>
        <name>L-glutamine</name>
        <dbReference type="ChEBI" id="CHEBI:58359"/>
    </ligand>
</feature>
<feature type="binding site" evidence="1">
    <location>
        <position position="235"/>
    </location>
    <ligand>
        <name>L-glutamine</name>
        <dbReference type="ChEBI" id="CHEBI:58359"/>
    </ligand>
</feature>
<feature type="binding site" evidence="1">
    <location>
        <position position="262"/>
    </location>
    <ligand>
        <name>L-glutamine</name>
        <dbReference type="ChEBI" id="CHEBI:58359"/>
    </ligand>
</feature>
<feature type="binding site" evidence="1">
    <location>
        <position position="265"/>
    </location>
    <ligand>
        <name>L-glutamine</name>
        <dbReference type="ChEBI" id="CHEBI:58359"/>
    </ligand>
</feature>
<feature type="binding site" evidence="1">
    <location>
        <position position="303"/>
    </location>
    <ligand>
        <name>L-glutamine</name>
        <dbReference type="ChEBI" id="CHEBI:58359"/>
    </ligand>
</feature>
<feature type="binding site" evidence="1">
    <location>
        <position position="305"/>
    </location>
    <ligand>
        <name>L-glutamine</name>
        <dbReference type="ChEBI" id="CHEBI:58359"/>
    </ligand>
</feature>
<feature type="binding site" evidence="1">
    <location>
        <position position="306"/>
    </location>
    <ligand>
        <name>L-glutamine</name>
        <dbReference type="ChEBI" id="CHEBI:58359"/>
    </ligand>
</feature>
<organism>
    <name type="scientific">Sulfolobus acidocaldarius (strain ATCC 33909 / DSM 639 / JCM 8929 / NBRC 15157 / NCIMB 11770)</name>
    <dbReference type="NCBI Taxonomy" id="330779"/>
    <lineage>
        <taxon>Archaea</taxon>
        <taxon>Thermoproteota</taxon>
        <taxon>Thermoprotei</taxon>
        <taxon>Sulfolobales</taxon>
        <taxon>Sulfolobaceae</taxon>
        <taxon>Sulfolobus</taxon>
    </lineage>
</organism>
<name>CARA_SULAC</name>
<gene>
    <name evidence="1" type="primary">carA</name>
    <name type="ordered locus">Saci_1619</name>
</gene>
<accession>Q4J8E9</accession>
<protein>
    <recommendedName>
        <fullName evidence="1">Carbamoyl phosphate synthase small chain</fullName>
        <ecNumber evidence="1">6.3.5.5</ecNumber>
    </recommendedName>
    <alternativeName>
        <fullName evidence="1">Carbamoyl phosphate synthetase glutamine chain</fullName>
    </alternativeName>
</protein>